<reference key="1">
    <citation type="journal article" date="2002" name="Nature">
        <title>The genome sequence of Schizosaccharomyces pombe.</title>
        <authorList>
            <person name="Wood V."/>
            <person name="Gwilliam R."/>
            <person name="Rajandream M.A."/>
            <person name="Lyne M.H."/>
            <person name="Lyne R."/>
            <person name="Stewart A."/>
            <person name="Sgouros J.G."/>
            <person name="Peat N."/>
            <person name="Hayles J."/>
            <person name="Baker S.G."/>
            <person name="Basham D."/>
            <person name="Bowman S."/>
            <person name="Brooks K."/>
            <person name="Brown D."/>
            <person name="Brown S."/>
            <person name="Chillingworth T."/>
            <person name="Churcher C.M."/>
            <person name="Collins M."/>
            <person name="Connor R."/>
            <person name="Cronin A."/>
            <person name="Davis P."/>
            <person name="Feltwell T."/>
            <person name="Fraser A."/>
            <person name="Gentles S."/>
            <person name="Goble A."/>
            <person name="Hamlin N."/>
            <person name="Harris D.E."/>
            <person name="Hidalgo J."/>
            <person name="Hodgson G."/>
            <person name="Holroyd S."/>
            <person name="Hornsby T."/>
            <person name="Howarth S."/>
            <person name="Huckle E.J."/>
            <person name="Hunt S."/>
            <person name="Jagels K."/>
            <person name="James K.D."/>
            <person name="Jones L."/>
            <person name="Jones M."/>
            <person name="Leather S."/>
            <person name="McDonald S."/>
            <person name="McLean J."/>
            <person name="Mooney P."/>
            <person name="Moule S."/>
            <person name="Mungall K.L."/>
            <person name="Murphy L.D."/>
            <person name="Niblett D."/>
            <person name="Odell C."/>
            <person name="Oliver K."/>
            <person name="O'Neil S."/>
            <person name="Pearson D."/>
            <person name="Quail M.A."/>
            <person name="Rabbinowitsch E."/>
            <person name="Rutherford K.M."/>
            <person name="Rutter S."/>
            <person name="Saunders D."/>
            <person name="Seeger K."/>
            <person name="Sharp S."/>
            <person name="Skelton J."/>
            <person name="Simmonds M.N."/>
            <person name="Squares R."/>
            <person name="Squares S."/>
            <person name="Stevens K."/>
            <person name="Taylor K."/>
            <person name="Taylor R.G."/>
            <person name="Tivey A."/>
            <person name="Walsh S.V."/>
            <person name="Warren T."/>
            <person name="Whitehead S."/>
            <person name="Woodward J.R."/>
            <person name="Volckaert G."/>
            <person name="Aert R."/>
            <person name="Robben J."/>
            <person name="Grymonprez B."/>
            <person name="Weltjens I."/>
            <person name="Vanstreels E."/>
            <person name="Rieger M."/>
            <person name="Schaefer M."/>
            <person name="Mueller-Auer S."/>
            <person name="Gabel C."/>
            <person name="Fuchs M."/>
            <person name="Duesterhoeft A."/>
            <person name="Fritzc C."/>
            <person name="Holzer E."/>
            <person name="Moestl D."/>
            <person name="Hilbert H."/>
            <person name="Borzym K."/>
            <person name="Langer I."/>
            <person name="Beck A."/>
            <person name="Lehrach H."/>
            <person name="Reinhardt R."/>
            <person name="Pohl T.M."/>
            <person name="Eger P."/>
            <person name="Zimmermann W."/>
            <person name="Wedler H."/>
            <person name="Wambutt R."/>
            <person name="Purnelle B."/>
            <person name="Goffeau A."/>
            <person name="Cadieu E."/>
            <person name="Dreano S."/>
            <person name="Gloux S."/>
            <person name="Lelaure V."/>
            <person name="Mottier S."/>
            <person name="Galibert F."/>
            <person name="Aves S.J."/>
            <person name="Xiang Z."/>
            <person name="Hunt C."/>
            <person name="Moore K."/>
            <person name="Hurst S.M."/>
            <person name="Lucas M."/>
            <person name="Rochet M."/>
            <person name="Gaillardin C."/>
            <person name="Tallada V.A."/>
            <person name="Garzon A."/>
            <person name="Thode G."/>
            <person name="Daga R.R."/>
            <person name="Cruzado L."/>
            <person name="Jimenez J."/>
            <person name="Sanchez M."/>
            <person name="del Rey F."/>
            <person name="Benito J."/>
            <person name="Dominguez A."/>
            <person name="Revuelta J.L."/>
            <person name="Moreno S."/>
            <person name="Armstrong J."/>
            <person name="Forsburg S.L."/>
            <person name="Cerutti L."/>
            <person name="Lowe T."/>
            <person name="McCombie W.R."/>
            <person name="Paulsen I."/>
            <person name="Potashkin J."/>
            <person name="Shpakovski G.V."/>
            <person name="Ussery D."/>
            <person name="Barrell B.G."/>
            <person name="Nurse P."/>
        </authorList>
    </citation>
    <scope>NUCLEOTIDE SEQUENCE [LARGE SCALE GENOMIC DNA]</scope>
    <source>
        <strain>972 / ATCC 24843</strain>
    </source>
</reference>
<reference key="2">
    <citation type="journal article" date="2011" name="Genetics">
        <title>Augmented annotation of the Schizosaccharomyces pombe genome reveals additional genes required for growth and viability.</title>
        <authorList>
            <person name="Bitton D.A."/>
            <person name="Wood V."/>
            <person name="Scutt P.J."/>
            <person name="Grallert A."/>
            <person name="Yates T."/>
            <person name="Smith D.L."/>
            <person name="Hagan I.M."/>
            <person name="Miller C.J."/>
        </authorList>
    </citation>
    <scope>IDENTIFICATION</scope>
</reference>
<sequence>MLVVFQRVVRATVLVGRKDTIRTVKTHSGAKKRWILTEDGKSFKRKHAGAQHLNRDTSSSTRARQRQWEEANTIQKRVLKRLLPFK</sequence>
<accession>G2TRP2</accession>
<proteinExistence type="evidence at transcript level"/>
<evidence type="ECO:0000250" key="1">
    <source>
        <dbReference type="UniProtKB" id="P53921"/>
    </source>
</evidence>
<evidence type="ECO:0000255" key="2"/>
<evidence type="ECO:0000256" key="3">
    <source>
        <dbReference type="SAM" id="MobiDB-lite"/>
    </source>
</evidence>
<evidence type="ECO:0000305" key="4"/>
<feature type="transit peptide" description="Mitochondrion" evidence="2">
    <location>
        <begin position="1"/>
        <end position="18"/>
    </location>
</feature>
<feature type="chain" id="PRO_0000416494" description="Large ribosomal subunit protein bL35m">
    <location>
        <begin position="19"/>
        <end position="86"/>
    </location>
</feature>
<feature type="region of interest" description="Disordered" evidence="3">
    <location>
        <begin position="45"/>
        <end position="69"/>
    </location>
</feature>
<organism>
    <name type="scientific">Schizosaccharomyces pombe (strain 972 / ATCC 24843)</name>
    <name type="common">Fission yeast</name>
    <dbReference type="NCBI Taxonomy" id="284812"/>
    <lineage>
        <taxon>Eukaryota</taxon>
        <taxon>Fungi</taxon>
        <taxon>Dikarya</taxon>
        <taxon>Ascomycota</taxon>
        <taxon>Taphrinomycotina</taxon>
        <taxon>Schizosaccharomycetes</taxon>
        <taxon>Schizosaccharomycetales</taxon>
        <taxon>Schizosaccharomycetaceae</taxon>
        <taxon>Schizosaccharomyces</taxon>
    </lineage>
</organism>
<gene>
    <name type="primary">new15</name>
    <name type="ORF">SPBC8D2.23</name>
</gene>
<protein>
    <recommendedName>
        <fullName evidence="4">Large ribosomal subunit protein bL35m</fullName>
    </recommendedName>
    <alternativeName>
        <fullName>Putative mitochondrial ribosomal protein new15, mitochondrial</fullName>
    </alternativeName>
</protein>
<comment type="function">
    <text evidence="1">Component of the mitochondrial ribosome (mitoribosome), a dedicated translation machinery responsible for the synthesis of mitochondrial genome-encoded proteins, including at least some of the essential transmembrane subunits of the mitochondrial respiratory chain. The mitoribosomes are attached to the mitochondrial inner membrane and translation products are cotranslationally integrated into the membrane.</text>
</comment>
<comment type="subunit">
    <text evidence="1">Component of the mitochondrial large ribosomal subunit (mt-LSU). Mature yeast 74S mitochondrial ribosomes consist of a small (37S) and a large (54S) subunit. The 37S small subunit contains a 15S ribosomal RNA (15S mt-rRNA) and at least 32 different proteins. The 54S large subunit contains a 21S rRNA (21S mt-rRNA) and at least 45 different proteins.</text>
</comment>
<comment type="subcellular location">
    <subcellularLocation>
        <location evidence="1">Mitochondrion</location>
    </subcellularLocation>
</comment>
<comment type="similarity">
    <text evidence="4">Belongs to the bacterial ribosomal protein bL35 family.</text>
</comment>
<dbReference type="EMBL" id="CU329671">
    <property type="protein sequence ID" value="CCD31360.1"/>
    <property type="molecule type" value="Genomic_DNA"/>
</dbReference>
<dbReference type="RefSeq" id="XP_004001707.1">
    <property type="nucleotide sequence ID" value="XM_004001658.1"/>
</dbReference>
<dbReference type="SMR" id="G2TRP2"/>
<dbReference type="ComplexPortal" id="CPX-10323">
    <property type="entry name" value="54S mitochondrial large ribosomal subunit"/>
</dbReference>
<dbReference type="FunCoup" id="G2TRP2">
    <property type="interactions" value="72"/>
</dbReference>
<dbReference type="STRING" id="284812.G2TRP2"/>
<dbReference type="PaxDb" id="4896-SPBC8D2.23.1"/>
<dbReference type="EnsemblFungi" id="SPBC8D2.23.1">
    <property type="protein sequence ID" value="SPBC8D2.23.1:pep"/>
    <property type="gene ID" value="SPBC8D2.23"/>
</dbReference>
<dbReference type="PomBase" id="SPBC8D2.23">
    <property type="gene designation" value="new15"/>
</dbReference>
<dbReference type="VEuPathDB" id="FungiDB:SPBC8D2.23"/>
<dbReference type="HOGENOM" id="CLU_191678_0_0_1"/>
<dbReference type="InParanoid" id="G2TRP2"/>
<dbReference type="OMA" id="WEEANTI"/>
<dbReference type="PRO" id="PR:G2TRP2"/>
<dbReference type="Proteomes" id="UP000002485">
    <property type="component" value="Chromosome II"/>
</dbReference>
<dbReference type="GO" id="GO:0015934">
    <property type="term" value="C:large ribosomal subunit"/>
    <property type="evidence" value="ECO:0000318"/>
    <property type="project" value="GO_Central"/>
</dbReference>
<dbReference type="GO" id="GO:0005762">
    <property type="term" value="C:mitochondrial large ribosomal subunit"/>
    <property type="evidence" value="ECO:0000255"/>
    <property type="project" value="PomBase"/>
</dbReference>
<dbReference type="GO" id="GO:0003735">
    <property type="term" value="F:structural constituent of ribosome"/>
    <property type="evidence" value="ECO:0000318"/>
    <property type="project" value="GO_Central"/>
</dbReference>
<dbReference type="GO" id="GO:0032543">
    <property type="term" value="P:mitochondrial translation"/>
    <property type="evidence" value="ECO:0000255"/>
    <property type="project" value="PomBase"/>
</dbReference>
<dbReference type="Gene3D" id="4.10.410.60">
    <property type="match status" value="1"/>
</dbReference>
<dbReference type="InterPro" id="IPR001706">
    <property type="entry name" value="Ribosomal_bL35"/>
</dbReference>
<dbReference type="InterPro" id="IPR021137">
    <property type="entry name" value="Ribosomal_bL35-like"/>
</dbReference>
<dbReference type="InterPro" id="IPR037229">
    <property type="entry name" value="Ribosomal_bL35_sf"/>
</dbReference>
<dbReference type="PANTHER" id="PTHR33343">
    <property type="entry name" value="54S RIBOSOMAL PROTEIN BL35M"/>
    <property type="match status" value="1"/>
</dbReference>
<dbReference type="PANTHER" id="PTHR33343:SF1">
    <property type="entry name" value="LARGE RIBOSOMAL SUBUNIT PROTEIN BL35M"/>
    <property type="match status" value="1"/>
</dbReference>
<dbReference type="Pfam" id="PF01632">
    <property type="entry name" value="Ribosomal_L35p"/>
    <property type="match status" value="1"/>
</dbReference>
<dbReference type="SUPFAM" id="SSF143034">
    <property type="entry name" value="L35p-like"/>
    <property type="match status" value="1"/>
</dbReference>
<keyword id="KW-0496">Mitochondrion</keyword>
<keyword id="KW-1185">Reference proteome</keyword>
<keyword id="KW-0687">Ribonucleoprotein</keyword>
<keyword id="KW-0689">Ribosomal protein</keyword>
<keyword id="KW-0809">Transit peptide</keyword>
<name>RN35_SCHPO</name>